<dbReference type="EMBL" id="CR382131">
    <property type="protein sequence ID" value="CAG79826.1"/>
    <property type="molecule type" value="Genomic_DNA"/>
</dbReference>
<dbReference type="RefSeq" id="XP_504231.1">
    <property type="nucleotide sequence ID" value="XM_504231.1"/>
</dbReference>
<dbReference type="STRING" id="284591.Q6C531"/>
<dbReference type="EnsemblFungi" id="CAG79826">
    <property type="protein sequence ID" value="CAG79826"/>
    <property type="gene ID" value="YALI0_E21505g"/>
</dbReference>
<dbReference type="KEGG" id="yli:2911898"/>
<dbReference type="VEuPathDB" id="FungiDB:YALI0_E21505g"/>
<dbReference type="HOGENOM" id="CLU_066684_2_0_1"/>
<dbReference type="InParanoid" id="Q6C531"/>
<dbReference type="OMA" id="WEGHSIN"/>
<dbReference type="OrthoDB" id="7580at4891"/>
<dbReference type="Proteomes" id="UP000001300">
    <property type="component" value="Chromosome E"/>
</dbReference>
<dbReference type="GO" id="GO:0005737">
    <property type="term" value="C:cytoplasm"/>
    <property type="evidence" value="ECO:0007669"/>
    <property type="project" value="UniProtKB-SubCell"/>
</dbReference>
<dbReference type="GO" id="GO:0005634">
    <property type="term" value="C:nucleus"/>
    <property type="evidence" value="ECO:0007669"/>
    <property type="project" value="UniProtKB-SubCell"/>
</dbReference>
<dbReference type="GO" id="GO:0051604">
    <property type="term" value="P:protein maturation"/>
    <property type="evidence" value="ECO:0000250"/>
    <property type="project" value="UniProtKB"/>
</dbReference>
<dbReference type="InterPro" id="IPR019191">
    <property type="entry name" value="Essential_protein_Yae1_N"/>
</dbReference>
<dbReference type="InterPro" id="IPR038881">
    <property type="entry name" value="Yae1-like"/>
</dbReference>
<dbReference type="PANTHER" id="PTHR18829">
    <property type="entry name" value="PROTEIN YAE1 HOMOLOG"/>
    <property type="match status" value="1"/>
</dbReference>
<dbReference type="PANTHER" id="PTHR18829:SF0">
    <property type="entry name" value="PROTEIN YAE1 HOMOLOG"/>
    <property type="match status" value="1"/>
</dbReference>
<dbReference type="Pfam" id="PF09811">
    <property type="entry name" value="Yae1_N"/>
    <property type="match status" value="1"/>
</dbReference>
<reference key="1">
    <citation type="journal article" date="2004" name="Nature">
        <title>Genome evolution in yeasts.</title>
        <authorList>
            <person name="Dujon B."/>
            <person name="Sherman D."/>
            <person name="Fischer G."/>
            <person name="Durrens P."/>
            <person name="Casaregola S."/>
            <person name="Lafontaine I."/>
            <person name="de Montigny J."/>
            <person name="Marck C."/>
            <person name="Neuveglise C."/>
            <person name="Talla E."/>
            <person name="Goffard N."/>
            <person name="Frangeul L."/>
            <person name="Aigle M."/>
            <person name="Anthouard V."/>
            <person name="Babour A."/>
            <person name="Barbe V."/>
            <person name="Barnay S."/>
            <person name="Blanchin S."/>
            <person name="Beckerich J.-M."/>
            <person name="Beyne E."/>
            <person name="Bleykasten C."/>
            <person name="Boisrame A."/>
            <person name="Boyer J."/>
            <person name="Cattolico L."/>
            <person name="Confanioleri F."/>
            <person name="de Daruvar A."/>
            <person name="Despons L."/>
            <person name="Fabre E."/>
            <person name="Fairhead C."/>
            <person name="Ferry-Dumazet H."/>
            <person name="Groppi A."/>
            <person name="Hantraye F."/>
            <person name="Hennequin C."/>
            <person name="Jauniaux N."/>
            <person name="Joyet P."/>
            <person name="Kachouri R."/>
            <person name="Kerrest A."/>
            <person name="Koszul R."/>
            <person name="Lemaire M."/>
            <person name="Lesur I."/>
            <person name="Ma L."/>
            <person name="Muller H."/>
            <person name="Nicaud J.-M."/>
            <person name="Nikolski M."/>
            <person name="Oztas S."/>
            <person name="Ozier-Kalogeropoulos O."/>
            <person name="Pellenz S."/>
            <person name="Potier S."/>
            <person name="Richard G.-F."/>
            <person name="Straub M.-L."/>
            <person name="Suleau A."/>
            <person name="Swennen D."/>
            <person name="Tekaia F."/>
            <person name="Wesolowski-Louvel M."/>
            <person name="Westhof E."/>
            <person name="Wirth B."/>
            <person name="Zeniou-Meyer M."/>
            <person name="Zivanovic Y."/>
            <person name="Bolotin-Fukuhara M."/>
            <person name="Thierry A."/>
            <person name="Bouchier C."/>
            <person name="Caudron B."/>
            <person name="Scarpelli C."/>
            <person name="Gaillardin C."/>
            <person name="Weissenbach J."/>
            <person name="Wincker P."/>
            <person name="Souciet J.-L."/>
        </authorList>
    </citation>
    <scope>NUCLEOTIDE SEQUENCE [LARGE SCALE GENOMIC DNA]</scope>
    <source>
        <strain>CLIB 122 / E 150</strain>
    </source>
</reference>
<organism>
    <name type="scientific">Yarrowia lipolytica (strain CLIB 122 / E 150)</name>
    <name type="common">Yeast</name>
    <name type="synonym">Candida lipolytica</name>
    <dbReference type="NCBI Taxonomy" id="284591"/>
    <lineage>
        <taxon>Eukaryota</taxon>
        <taxon>Fungi</taxon>
        <taxon>Dikarya</taxon>
        <taxon>Ascomycota</taxon>
        <taxon>Saccharomycotina</taxon>
        <taxon>Dipodascomycetes</taxon>
        <taxon>Dipodascales</taxon>
        <taxon>Dipodascales incertae sedis</taxon>
        <taxon>Yarrowia</taxon>
    </lineage>
</organism>
<comment type="function">
    <text evidence="2">The complex LTO1:YAE1 may function as a target specific adapter that probably recruits apo-RPLI1 to the cytosolic iron-sulfur protein assembly (CIA) complex machinery. May be required for biogenesis of the large ribosomal subunit and initiation of translation.</text>
</comment>
<comment type="subunit">
    <text evidence="2">May form a complex with LTO1.</text>
</comment>
<comment type="subcellular location">
    <subcellularLocation>
        <location evidence="1">Cytoplasm</location>
    </subcellularLocation>
    <subcellularLocation>
        <location evidence="1">Nucleus</location>
    </subcellularLocation>
</comment>
<comment type="similarity">
    <text evidence="3">Belongs to the YAE1 family.</text>
</comment>
<gene>
    <name type="primary">YAE1</name>
    <name type="ordered locus">YALI0E21505g</name>
</gene>
<feature type="chain" id="PRO_0000324436" description="Protein YAE1">
    <location>
        <begin position="1"/>
        <end position="121"/>
    </location>
</feature>
<feature type="region of interest" description="deca-GX3 motif; required for interaction with LTO1" evidence="1">
    <location>
        <begin position="28"/>
        <end position="68"/>
    </location>
</feature>
<sequence length="121" mass="13777">MSDIWDDEEVRETPSEITRVKRDHSQAGYLAGVTKAKDESLQEGFNAGYPIGGQLGLSIGRIFGYLQGKGLVEEEKQARKELSSTRIFDRQYWTTDAAPTYEGVHPLVKQWENKIDVMKRE</sequence>
<protein>
    <recommendedName>
        <fullName>Protein YAE1</fullName>
    </recommendedName>
</protein>
<proteinExistence type="inferred from homology"/>
<name>YAE1_YARLI</name>
<accession>Q6C531</accession>
<evidence type="ECO:0000250" key="1">
    <source>
        <dbReference type="UniProtKB" id="P47118"/>
    </source>
</evidence>
<evidence type="ECO:0000250" key="2">
    <source>
        <dbReference type="UniProtKB" id="Q9NRH1"/>
    </source>
</evidence>
<evidence type="ECO:0000305" key="3"/>
<keyword id="KW-0963">Cytoplasm</keyword>
<keyword id="KW-0539">Nucleus</keyword>
<keyword id="KW-1185">Reference proteome</keyword>